<sequence>MFRGASAINLDTKGRVAIPKRYREPLHVEYNSQLVITVDIQSACLLLYPLDEWSKIEAKLLLLSDTLPAERAMKRMLLGYAHECELDGNGRLLLPLPLRQYANLGKRAMLVGQLNKFELWDETAWQHQIEQSRETIQDEEFAENIRLADFSL</sequence>
<gene>
    <name evidence="1" type="primary">mraZ</name>
    <name type="ordered locus">Swoo_4542</name>
</gene>
<name>MRAZ_SHEWM</name>
<organism>
    <name type="scientific">Shewanella woodyi (strain ATCC 51908 / MS32)</name>
    <dbReference type="NCBI Taxonomy" id="392500"/>
    <lineage>
        <taxon>Bacteria</taxon>
        <taxon>Pseudomonadati</taxon>
        <taxon>Pseudomonadota</taxon>
        <taxon>Gammaproteobacteria</taxon>
        <taxon>Alteromonadales</taxon>
        <taxon>Shewanellaceae</taxon>
        <taxon>Shewanella</taxon>
    </lineage>
</organism>
<dbReference type="EMBL" id="CP000961">
    <property type="protein sequence ID" value="ACA88792.1"/>
    <property type="molecule type" value="Genomic_DNA"/>
</dbReference>
<dbReference type="RefSeq" id="WP_012327118.1">
    <property type="nucleotide sequence ID" value="NC_010506.1"/>
</dbReference>
<dbReference type="SMR" id="B1KKY6"/>
<dbReference type="STRING" id="392500.Swoo_4542"/>
<dbReference type="KEGG" id="swd:Swoo_4542"/>
<dbReference type="eggNOG" id="COG2001">
    <property type="taxonomic scope" value="Bacteria"/>
</dbReference>
<dbReference type="HOGENOM" id="CLU_107907_2_0_6"/>
<dbReference type="Proteomes" id="UP000002168">
    <property type="component" value="Chromosome"/>
</dbReference>
<dbReference type="GO" id="GO:0005737">
    <property type="term" value="C:cytoplasm"/>
    <property type="evidence" value="ECO:0007669"/>
    <property type="project" value="UniProtKB-UniRule"/>
</dbReference>
<dbReference type="GO" id="GO:0009295">
    <property type="term" value="C:nucleoid"/>
    <property type="evidence" value="ECO:0007669"/>
    <property type="project" value="UniProtKB-SubCell"/>
</dbReference>
<dbReference type="GO" id="GO:0003700">
    <property type="term" value="F:DNA-binding transcription factor activity"/>
    <property type="evidence" value="ECO:0007669"/>
    <property type="project" value="UniProtKB-UniRule"/>
</dbReference>
<dbReference type="GO" id="GO:0000976">
    <property type="term" value="F:transcription cis-regulatory region binding"/>
    <property type="evidence" value="ECO:0007669"/>
    <property type="project" value="TreeGrafter"/>
</dbReference>
<dbReference type="GO" id="GO:2000143">
    <property type="term" value="P:negative regulation of DNA-templated transcription initiation"/>
    <property type="evidence" value="ECO:0007669"/>
    <property type="project" value="TreeGrafter"/>
</dbReference>
<dbReference type="CDD" id="cd16321">
    <property type="entry name" value="MraZ_C"/>
    <property type="match status" value="1"/>
</dbReference>
<dbReference type="CDD" id="cd16320">
    <property type="entry name" value="MraZ_N"/>
    <property type="match status" value="1"/>
</dbReference>
<dbReference type="Gene3D" id="3.40.1550.20">
    <property type="entry name" value="Transcriptional regulator MraZ domain"/>
    <property type="match status" value="1"/>
</dbReference>
<dbReference type="HAMAP" id="MF_01008">
    <property type="entry name" value="MraZ"/>
    <property type="match status" value="1"/>
</dbReference>
<dbReference type="InterPro" id="IPR003444">
    <property type="entry name" value="MraZ"/>
</dbReference>
<dbReference type="InterPro" id="IPR035644">
    <property type="entry name" value="MraZ_C"/>
</dbReference>
<dbReference type="InterPro" id="IPR020603">
    <property type="entry name" value="MraZ_dom"/>
</dbReference>
<dbReference type="InterPro" id="IPR035642">
    <property type="entry name" value="MraZ_N"/>
</dbReference>
<dbReference type="InterPro" id="IPR038619">
    <property type="entry name" value="MraZ_sf"/>
</dbReference>
<dbReference type="InterPro" id="IPR007159">
    <property type="entry name" value="SpoVT-AbrB_dom"/>
</dbReference>
<dbReference type="InterPro" id="IPR037914">
    <property type="entry name" value="SpoVT-AbrB_sf"/>
</dbReference>
<dbReference type="NCBIfam" id="TIGR00242">
    <property type="entry name" value="division/cell wall cluster transcriptional repressor MraZ"/>
    <property type="match status" value="1"/>
</dbReference>
<dbReference type="PANTHER" id="PTHR34701">
    <property type="entry name" value="TRANSCRIPTIONAL REGULATOR MRAZ"/>
    <property type="match status" value="1"/>
</dbReference>
<dbReference type="PANTHER" id="PTHR34701:SF1">
    <property type="entry name" value="TRANSCRIPTIONAL REGULATOR MRAZ"/>
    <property type="match status" value="1"/>
</dbReference>
<dbReference type="Pfam" id="PF02381">
    <property type="entry name" value="MraZ"/>
    <property type="match status" value="2"/>
</dbReference>
<dbReference type="SUPFAM" id="SSF89447">
    <property type="entry name" value="AbrB/MazE/MraZ-like"/>
    <property type="match status" value="1"/>
</dbReference>
<dbReference type="PROSITE" id="PS51740">
    <property type="entry name" value="SPOVT_ABRB"/>
    <property type="match status" value="2"/>
</dbReference>
<comment type="subunit">
    <text evidence="1">Forms oligomers.</text>
</comment>
<comment type="subcellular location">
    <subcellularLocation>
        <location evidence="1">Cytoplasm</location>
        <location evidence="1">Nucleoid</location>
    </subcellularLocation>
</comment>
<comment type="similarity">
    <text evidence="1">Belongs to the MraZ family.</text>
</comment>
<keyword id="KW-0963">Cytoplasm</keyword>
<keyword id="KW-0238">DNA-binding</keyword>
<keyword id="KW-1185">Reference proteome</keyword>
<keyword id="KW-0677">Repeat</keyword>
<keyword id="KW-0804">Transcription</keyword>
<keyword id="KW-0805">Transcription regulation</keyword>
<accession>B1KKY6</accession>
<evidence type="ECO:0000255" key="1">
    <source>
        <dbReference type="HAMAP-Rule" id="MF_01008"/>
    </source>
</evidence>
<evidence type="ECO:0000255" key="2">
    <source>
        <dbReference type="PROSITE-ProRule" id="PRU01076"/>
    </source>
</evidence>
<reference key="1">
    <citation type="submission" date="2008-02" db="EMBL/GenBank/DDBJ databases">
        <title>Complete sequence of Shewanella woodyi ATCC 51908.</title>
        <authorList>
            <consortium name="US DOE Joint Genome Institute"/>
            <person name="Copeland A."/>
            <person name="Lucas S."/>
            <person name="Lapidus A."/>
            <person name="Glavina del Rio T."/>
            <person name="Dalin E."/>
            <person name="Tice H."/>
            <person name="Bruce D."/>
            <person name="Goodwin L."/>
            <person name="Pitluck S."/>
            <person name="Sims D."/>
            <person name="Brettin T."/>
            <person name="Detter J.C."/>
            <person name="Han C."/>
            <person name="Kuske C.R."/>
            <person name="Schmutz J."/>
            <person name="Larimer F."/>
            <person name="Land M."/>
            <person name="Hauser L."/>
            <person name="Kyrpides N."/>
            <person name="Lykidis A."/>
            <person name="Zhao J.-S."/>
            <person name="Richardson P."/>
        </authorList>
    </citation>
    <scope>NUCLEOTIDE SEQUENCE [LARGE SCALE GENOMIC DNA]</scope>
    <source>
        <strain>ATCC 51908 / MS32</strain>
    </source>
</reference>
<protein>
    <recommendedName>
        <fullName>Transcriptional regulator MraZ</fullName>
    </recommendedName>
</protein>
<proteinExistence type="inferred from homology"/>
<feature type="chain" id="PRO_1000191335" description="Transcriptional regulator MraZ">
    <location>
        <begin position="1"/>
        <end position="152"/>
    </location>
</feature>
<feature type="domain" description="SpoVT-AbrB 1" evidence="2">
    <location>
        <begin position="5"/>
        <end position="52"/>
    </location>
</feature>
<feature type="domain" description="SpoVT-AbrB 2" evidence="2">
    <location>
        <begin position="81"/>
        <end position="124"/>
    </location>
</feature>